<comment type="function">
    <text evidence="1">E3 ubiquitin-protein ligase that plays a role in the control of mitochondrial morphology. Promotes mitochondrial fragmentation and influences mitochondrial localization. Inhibits cell growth. E3 ubiquitin ligases accept ubiquitin from an E2 ubiquitin-conjugating enzyme in the form of a thioester and then directly transfer the ubiquitin to targeted substrates.</text>
</comment>
<comment type="catalytic activity">
    <reaction evidence="1">
        <text>S-ubiquitinyl-[E2 ubiquitin-conjugating enzyme]-L-cysteine + [acceptor protein]-L-lysine = [E2 ubiquitin-conjugating enzyme]-L-cysteine + N(6)-ubiquitinyl-[acceptor protein]-L-lysine.</text>
        <dbReference type="EC" id="2.3.2.27"/>
    </reaction>
</comment>
<comment type="pathway">
    <text evidence="1">Protein modification; protein ubiquitination.</text>
</comment>
<comment type="subunit">
    <text evidence="1">Homooligomer.</text>
</comment>
<comment type="subcellular location">
    <subcellularLocation>
        <location evidence="1">Mitochondrion outer membrane</location>
        <topology evidence="2">Multi-pass membrane protein</topology>
    </subcellularLocation>
</comment>
<comment type="domain">
    <text evidence="1">The zinc finger domain is required for E3 ligase activity.</text>
</comment>
<keyword id="KW-0472">Membrane</keyword>
<keyword id="KW-0479">Metal-binding</keyword>
<keyword id="KW-0496">Mitochondrion</keyword>
<keyword id="KW-1000">Mitochondrion outer membrane</keyword>
<keyword id="KW-1185">Reference proteome</keyword>
<keyword id="KW-0808">Transferase</keyword>
<keyword id="KW-0812">Transmembrane</keyword>
<keyword id="KW-1133">Transmembrane helix</keyword>
<keyword id="KW-0833">Ubl conjugation pathway</keyword>
<keyword id="KW-0862">Zinc</keyword>
<keyword id="KW-0863">Zinc-finger</keyword>
<dbReference type="EC" id="2.3.2.27"/>
<dbReference type="EMBL" id="BC068869">
    <property type="protein sequence ID" value="AAH68869.1"/>
    <property type="molecule type" value="mRNA"/>
</dbReference>
<dbReference type="RefSeq" id="NP_001084716.1">
    <property type="nucleotide sequence ID" value="NM_001091247.1"/>
</dbReference>
<dbReference type="SMR" id="Q6NTT6"/>
<dbReference type="DNASU" id="414680"/>
<dbReference type="GeneID" id="414680"/>
<dbReference type="KEGG" id="xla:414680"/>
<dbReference type="AGR" id="Xenbase:XB-GENE-5884896"/>
<dbReference type="CTD" id="414680"/>
<dbReference type="Xenbase" id="XB-GENE-5884896">
    <property type="gene designation" value="mul1.L"/>
</dbReference>
<dbReference type="OrthoDB" id="66726at2759"/>
<dbReference type="UniPathway" id="UPA00143"/>
<dbReference type="Proteomes" id="UP000186698">
    <property type="component" value="Chromosome 7L"/>
</dbReference>
<dbReference type="Bgee" id="414680">
    <property type="expression patterns" value="Expressed in intestine and 20 other cell types or tissues"/>
</dbReference>
<dbReference type="GO" id="GO:0005741">
    <property type="term" value="C:mitochondrial outer membrane"/>
    <property type="evidence" value="ECO:0000250"/>
    <property type="project" value="UniProtKB"/>
</dbReference>
<dbReference type="GO" id="GO:0005739">
    <property type="term" value="C:mitochondrion"/>
    <property type="evidence" value="ECO:0000318"/>
    <property type="project" value="GO_Central"/>
</dbReference>
<dbReference type="GO" id="GO:0005777">
    <property type="term" value="C:peroxisome"/>
    <property type="evidence" value="ECO:0000250"/>
    <property type="project" value="UniProtKB"/>
</dbReference>
<dbReference type="GO" id="GO:0042802">
    <property type="term" value="F:identical protein binding"/>
    <property type="evidence" value="ECO:0000250"/>
    <property type="project" value="UniProtKB"/>
</dbReference>
<dbReference type="GO" id="GO:0061630">
    <property type="term" value="F:ubiquitin protein ligase activity"/>
    <property type="evidence" value="ECO:0000250"/>
    <property type="project" value="UniProtKB"/>
</dbReference>
<dbReference type="GO" id="GO:0004842">
    <property type="term" value="F:ubiquitin-protein transferase activity"/>
    <property type="evidence" value="ECO:0000318"/>
    <property type="project" value="GO_Central"/>
</dbReference>
<dbReference type="GO" id="GO:0008270">
    <property type="term" value="F:zinc ion binding"/>
    <property type="evidence" value="ECO:0007669"/>
    <property type="project" value="UniProtKB-KW"/>
</dbReference>
<dbReference type="GO" id="GO:0000266">
    <property type="term" value="P:mitochondrial fission"/>
    <property type="evidence" value="ECO:0000250"/>
    <property type="project" value="UniProtKB"/>
</dbReference>
<dbReference type="GO" id="GO:0051646">
    <property type="term" value="P:mitochondrion localization"/>
    <property type="evidence" value="ECO:0000250"/>
    <property type="project" value="UniProtKB"/>
</dbReference>
<dbReference type="GO" id="GO:0043123">
    <property type="term" value="P:positive regulation of canonical NF-kappaB signal transduction"/>
    <property type="evidence" value="ECO:0000250"/>
    <property type="project" value="UniProtKB"/>
</dbReference>
<dbReference type="GO" id="GO:0016567">
    <property type="term" value="P:protein ubiquitination"/>
    <property type="evidence" value="ECO:0000250"/>
    <property type="project" value="UniProtKB"/>
</dbReference>
<dbReference type="CDD" id="cd16648">
    <property type="entry name" value="mRING-HC-C3HC5_MAPL"/>
    <property type="match status" value="1"/>
</dbReference>
<dbReference type="FunFam" id="3.30.40.10:FF:000351">
    <property type="entry name" value="Mitochondrial ubiquitin ligase activator of NFKB 1"/>
    <property type="match status" value="1"/>
</dbReference>
<dbReference type="Gene3D" id="3.30.40.10">
    <property type="entry name" value="Zinc/RING finger domain, C3HC4 (zinc finger)"/>
    <property type="match status" value="1"/>
</dbReference>
<dbReference type="InterPro" id="IPR051652">
    <property type="entry name" value="MDM2_MDM4_MUL1"/>
</dbReference>
<dbReference type="InterPro" id="IPR022170">
    <property type="entry name" value="MUL1-like"/>
</dbReference>
<dbReference type="InterPro" id="IPR001841">
    <property type="entry name" value="Znf_RING"/>
</dbReference>
<dbReference type="InterPro" id="IPR013083">
    <property type="entry name" value="Znf_RING/FYVE/PHD"/>
</dbReference>
<dbReference type="PANTHER" id="PTHR12183">
    <property type="entry name" value="MITOCHONDRIAL UBIQUITIN LIGASE ACTIVATOR OF NFKB 1"/>
    <property type="match status" value="1"/>
</dbReference>
<dbReference type="PANTHER" id="PTHR12183:SF4">
    <property type="entry name" value="MITOCHONDRIAL UBIQUITIN LIGASE ACTIVATOR OF NFKB 1"/>
    <property type="match status" value="1"/>
</dbReference>
<dbReference type="Pfam" id="PF12483">
    <property type="entry name" value="GIDE"/>
    <property type="match status" value="1"/>
</dbReference>
<dbReference type="Pfam" id="PF13920">
    <property type="entry name" value="zf-C3HC4_3"/>
    <property type="match status" value="1"/>
</dbReference>
<dbReference type="SMART" id="SM00184">
    <property type="entry name" value="RING"/>
    <property type="match status" value="1"/>
</dbReference>
<dbReference type="SUPFAM" id="SSF57850">
    <property type="entry name" value="RING/U-box"/>
    <property type="match status" value="1"/>
</dbReference>
<dbReference type="PROSITE" id="PS50089">
    <property type="entry name" value="ZF_RING_2"/>
    <property type="match status" value="1"/>
</dbReference>
<feature type="chain" id="PRO_0000277664" description="Mitochondrial ubiquitin ligase activator of nfkb 1">
    <location>
        <begin position="1"/>
        <end position="353"/>
    </location>
</feature>
<feature type="topological domain" description="Cytoplasmic" evidence="2">
    <location>
        <begin position="1"/>
        <end position="8"/>
    </location>
</feature>
<feature type="transmembrane region" description="Helical" evidence="2">
    <location>
        <begin position="9"/>
        <end position="29"/>
    </location>
</feature>
<feature type="topological domain" description="Mitochondrial intermembrane" evidence="2">
    <location>
        <begin position="30"/>
        <end position="239"/>
    </location>
</feature>
<feature type="transmembrane region" description="Helical" evidence="2">
    <location>
        <begin position="240"/>
        <end position="260"/>
    </location>
</feature>
<feature type="topological domain" description="Cytoplasmic" evidence="2">
    <location>
        <begin position="261"/>
        <end position="353"/>
    </location>
</feature>
<feature type="zinc finger region" description="RING-type" evidence="3">
    <location>
        <begin position="303"/>
        <end position="341"/>
    </location>
</feature>
<name>MUL1_XENLA</name>
<evidence type="ECO:0000250" key="1">
    <source>
        <dbReference type="UniProtKB" id="Q969V5"/>
    </source>
</evidence>
<evidence type="ECO:0000255" key="2"/>
<evidence type="ECO:0000255" key="3">
    <source>
        <dbReference type="PROSITE-ProRule" id="PRU00175"/>
    </source>
</evidence>
<evidence type="ECO:0000305" key="4"/>
<sequence>MENGGRPSVGQVILLTTSSAITALFYSIYRHKYRSVQTLKEAKKFCLTDDLPAVLSDLPGKCVPYAVIEGAVTSVKEVLNSQYVENCKGVIQRLSLKEHKMVWNRTTHLWNDHEKIIHQRSNTVPFDLAPENPGESGVSVRVLRPLEAVDLGLETIYEKFHPAVQSFSNILGHYMTGERPKGVQETEEMLKIGATITGVGELVLDNKTIKLQPPKDGMLFYLSSMDYEGLLEKQEVQMRWWRILSIVFGVASCITLFFILRRKYRHYKEKQHLKNLQREFEESRARQRVQQEPQNKEEVQNPCSICLSTEKSCVFLECGHVCSCISCYQALPSPKKCPICRNFIDRIVPLYNS</sequence>
<accession>Q6NTT6</accession>
<proteinExistence type="evidence at transcript level"/>
<protein>
    <recommendedName>
        <fullName>Mitochondrial ubiquitin ligase activator of nfkb 1</fullName>
        <ecNumber>2.3.2.27</ecNumber>
    </recommendedName>
    <alternativeName>
        <fullName>E3 ubiquitin-protein ligase mul1</fullName>
    </alternativeName>
    <alternativeName>
        <fullName evidence="4">RING-type E3 ubiquitin transferase nfkb 1</fullName>
    </alternativeName>
</protein>
<organism>
    <name type="scientific">Xenopus laevis</name>
    <name type="common">African clawed frog</name>
    <dbReference type="NCBI Taxonomy" id="8355"/>
    <lineage>
        <taxon>Eukaryota</taxon>
        <taxon>Metazoa</taxon>
        <taxon>Chordata</taxon>
        <taxon>Craniata</taxon>
        <taxon>Vertebrata</taxon>
        <taxon>Euteleostomi</taxon>
        <taxon>Amphibia</taxon>
        <taxon>Batrachia</taxon>
        <taxon>Anura</taxon>
        <taxon>Pipoidea</taxon>
        <taxon>Pipidae</taxon>
        <taxon>Xenopodinae</taxon>
        <taxon>Xenopus</taxon>
        <taxon>Xenopus</taxon>
    </lineage>
</organism>
<gene>
    <name type="primary">mul1</name>
</gene>
<reference key="1">
    <citation type="submission" date="2004-04" db="EMBL/GenBank/DDBJ databases">
        <authorList>
            <consortium name="NIH - Xenopus Gene Collection (XGC) project"/>
        </authorList>
    </citation>
    <scope>NUCLEOTIDE SEQUENCE [LARGE SCALE MRNA]</scope>
    <source>
        <tissue>Kidney</tissue>
    </source>
</reference>